<proteinExistence type="evidence at protein level"/>
<evidence type="ECO:0000250" key="1"/>
<evidence type="ECO:0000269" key="2">
    <source>
    </source>
</evidence>
<evidence type="ECO:0000305" key="3"/>
<keyword id="KW-0143">Chaperone</keyword>
<keyword id="KW-1015">Disulfide bond</keyword>
<keyword id="KW-0472">Membrane</keyword>
<keyword id="KW-0479">Metal-binding</keyword>
<keyword id="KW-0496">Mitochondrion</keyword>
<keyword id="KW-0999">Mitochondrion inner membrane</keyword>
<keyword id="KW-0653">Protein transport</keyword>
<keyword id="KW-1185">Reference proteome</keyword>
<keyword id="KW-0811">Translocation</keyword>
<keyword id="KW-0813">Transport</keyword>
<keyword id="KW-0862">Zinc</keyword>
<name>TIM8_NEUCR</name>
<accession>Q9Y8C0</accession>
<accession>A7UWR2</accession>
<accession>Q7SBT0</accession>
<reference key="1">
    <citation type="journal article" date="1999" name="FEBS Lett.">
        <title>The mitochondrial TIM22 preprotein translocase is highly conserved throughout the eukaryotic kingdom.</title>
        <authorList>
            <person name="Bauer M.F."/>
            <person name="Rothbauer U."/>
            <person name="Muehlenbein N."/>
            <person name="Smith R.J.H."/>
            <person name="Gerbitz K.-D."/>
            <person name="Neupert W."/>
            <person name="Brunner M."/>
            <person name="Hofmann S."/>
        </authorList>
    </citation>
    <scope>NUCLEOTIDE SEQUENCE [MRNA]</scope>
</reference>
<reference key="2">
    <citation type="journal article" date="2003" name="Nature">
        <title>The genome sequence of the filamentous fungus Neurospora crassa.</title>
        <authorList>
            <person name="Galagan J.E."/>
            <person name="Calvo S.E."/>
            <person name="Borkovich K.A."/>
            <person name="Selker E.U."/>
            <person name="Read N.D."/>
            <person name="Jaffe D.B."/>
            <person name="FitzHugh W."/>
            <person name="Ma L.-J."/>
            <person name="Smirnov S."/>
            <person name="Purcell S."/>
            <person name="Rehman B."/>
            <person name="Elkins T."/>
            <person name="Engels R."/>
            <person name="Wang S."/>
            <person name="Nielsen C.B."/>
            <person name="Butler J."/>
            <person name="Endrizzi M."/>
            <person name="Qui D."/>
            <person name="Ianakiev P."/>
            <person name="Bell-Pedersen D."/>
            <person name="Nelson M.A."/>
            <person name="Werner-Washburne M."/>
            <person name="Selitrennikoff C.P."/>
            <person name="Kinsey J.A."/>
            <person name="Braun E.L."/>
            <person name="Zelter A."/>
            <person name="Schulte U."/>
            <person name="Kothe G.O."/>
            <person name="Jedd G."/>
            <person name="Mewes H.-W."/>
            <person name="Staben C."/>
            <person name="Marcotte E."/>
            <person name="Greenberg D."/>
            <person name="Roy A."/>
            <person name="Foley K."/>
            <person name="Naylor J."/>
            <person name="Stange-Thomann N."/>
            <person name="Barrett R."/>
            <person name="Gnerre S."/>
            <person name="Kamal M."/>
            <person name="Kamvysselis M."/>
            <person name="Mauceli E.W."/>
            <person name="Bielke C."/>
            <person name="Rudd S."/>
            <person name="Frishman D."/>
            <person name="Krystofova S."/>
            <person name="Rasmussen C."/>
            <person name="Metzenberg R.L."/>
            <person name="Perkins D.D."/>
            <person name="Kroken S."/>
            <person name="Cogoni C."/>
            <person name="Macino G."/>
            <person name="Catcheside D.E.A."/>
            <person name="Li W."/>
            <person name="Pratt R.J."/>
            <person name="Osmani S.A."/>
            <person name="DeSouza C.P.C."/>
            <person name="Glass N.L."/>
            <person name="Orbach M.J."/>
            <person name="Berglund J.A."/>
            <person name="Voelker R."/>
            <person name="Yarden O."/>
            <person name="Plamann M."/>
            <person name="Seiler S."/>
            <person name="Dunlap J.C."/>
            <person name="Radford A."/>
            <person name="Aramayo R."/>
            <person name="Natvig D.O."/>
            <person name="Alex L.A."/>
            <person name="Mannhaupt G."/>
            <person name="Ebbole D.J."/>
            <person name="Freitag M."/>
            <person name="Paulsen I."/>
            <person name="Sachs M.S."/>
            <person name="Lander E.S."/>
            <person name="Nusbaum C."/>
            <person name="Birren B.W."/>
        </authorList>
    </citation>
    <scope>NUCLEOTIDE SEQUENCE [LARGE SCALE GENOMIC DNA]</scope>
    <source>
        <strain>ATCC 24698 / 74-OR23-1A / CBS 708.71 / DSM 1257 / FGSC 987</strain>
    </source>
</reference>
<reference key="3">
    <citation type="journal article" date="2004" name="J. Biol. Chem.">
        <title>The Tim8-Tim13 complex of Neurospora crassa functions in the assembly of proteins into both mitochondrial membranes.</title>
        <authorList>
            <person name="Hoppins S.C."/>
            <person name="Nargang F.E."/>
        </authorList>
    </citation>
    <scope>FUNCTION IN TRANSFER OF BETA-BARREL PROTEINS</scope>
    <scope>SUBCELLULAR LOCATION</scope>
    <scope>SUBUNIT</scope>
</reference>
<organism>
    <name type="scientific">Neurospora crassa (strain ATCC 24698 / 74-OR23-1A / CBS 708.71 / DSM 1257 / FGSC 987)</name>
    <dbReference type="NCBI Taxonomy" id="367110"/>
    <lineage>
        <taxon>Eukaryota</taxon>
        <taxon>Fungi</taxon>
        <taxon>Dikarya</taxon>
        <taxon>Ascomycota</taxon>
        <taxon>Pezizomycotina</taxon>
        <taxon>Sordariomycetes</taxon>
        <taxon>Sordariomycetidae</taxon>
        <taxon>Sordariales</taxon>
        <taxon>Sordariaceae</taxon>
        <taxon>Neurospora</taxon>
    </lineage>
</organism>
<sequence length="92" mass="10420">MDIPQADLDLLNEKDKNELRGFISNETQRQRVQGQTHALTDSCWKKCVTSPIKTNQLDKTEAVCMADCVERFLDVNLTIMAHVQKITRGGSK</sequence>
<gene>
    <name type="primary">tim8</name>
    <name type="ORF">NCU06225</name>
    <name type="ORF">NCU11311</name>
</gene>
<comment type="function">
    <text evidence="2">Mitochondrial intermembrane chaperone that participates in the import and insertion of some multi-pass transmembrane proteins into the mitochondrial inner membrane. Also required for the transfer of beta-barrel precursors from the TOM complex to the sorting and assembly machinery (SAM complex) of the outer membrane. Acts as a chaperone-like protein that protects the hydrophobic precursors from aggregation and guide them through the mitochondrial intermembrane space. The tim8-tim13 complex is non essential and only mediates the import of few proteins, while the predominant tim9-tim10 70 kDa complex is crucial and mediates the import of much more proteins.</text>
</comment>
<comment type="subunit">
    <text evidence="2">Heterohexamer; composed of 3 copies of tim8 and 3 copies of tim13, named soluble 70 kDa complex. Associates with the TIM22 complex, whose core is composed of tim22 and tim54. Interacts with the transmembrane regions of multi-pass transmembrane proteins in transit.</text>
</comment>
<comment type="subcellular location">
    <subcellularLocation>
        <location evidence="2">Mitochondrion inner membrane</location>
        <topology evidence="2">Peripheral membrane protein</topology>
        <orientation evidence="2">Intermembrane side</orientation>
    </subcellularLocation>
</comment>
<comment type="domain">
    <text evidence="1">The twin CX3C motif contains 4 conserved Cys residues that form 2 disulfide bonds in the mitochondrial intermembrane space. However, during the transit of tim8 from cytoplasm into mitochondrion, the Cys residues probably coordinate zinc, thereby preventing folding and allowing its transfer across mitochondrial outer membrane (By similarity).</text>
</comment>
<comment type="similarity">
    <text evidence="3">Belongs to the small Tim family.</text>
</comment>
<dbReference type="EMBL" id="AF142423">
    <property type="protein sequence ID" value="AAD39161.1"/>
    <property type="molecule type" value="mRNA"/>
</dbReference>
<dbReference type="EMBL" id="CM002238">
    <property type="protein sequence ID" value="EDO65121.1"/>
    <property type="molecule type" value="Genomic_DNA"/>
</dbReference>
<dbReference type="RefSeq" id="XP_001728212.1">
    <property type="nucleotide sequence ID" value="XM_001728160.2"/>
</dbReference>
<dbReference type="SMR" id="Q9Y8C0"/>
<dbReference type="FunCoup" id="Q9Y8C0">
    <property type="interactions" value="496"/>
</dbReference>
<dbReference type="STRING" id="367110.Q9Y8C0"/>
<dbReference type="PaxDb" id="5141-EFNCRP00000005941"/>
<dbReference type="EnsemblFungi" id="EDO65121">
    <property type="protein sequence ID" value="EDO65121"/>
    <property type="gene ID" value="NCU11311"/>
</dbReference>
<dbReference type="GeneID" id="5847395"/>
<dbReference type="KEGG" id="ncr:NCU11311"/>
<dbReference type="VEuPathDB" id="FungiDB:NCU11311"/>
<dbReference type="HOGENOM" id="CLU_141397_1_0_1"/>
<dbReference type="InParanoid" id="Q9Y8C0"/>
<dbReference type="OMA" id="NEICWDK"/>
<dbReference type="OrthoDB" id="344165at2759"/>
<dbReference type="Proteomes" id="UP000001805">
    <property type="component" value="Chromosome 3, Linkage Group III"/>
</dbReference>
<dbReference type="GO" id="GO:0005743">
    <property type="term" value="C:mitochondrial inner membrane"/>
    <property type="evidence" value="ECO:0007669"/>
    <property type="project" value="UniProtKB-SubCell"/>
</dbReference>
<dbReference type="GO" id="GO:0046872">
    <property type="term" value="F:metal ion binding"/>
    <property type="evidence" value="ECO:0007669"/>
    <property type="project" value="UniProtKB-KW"/>
</dbReference>
<dbReference type="GO" id="GO:0015031">
    <property type="term" value="P:protein transport"/>
    <property type="evidence" value="ECO:0007669"/>
    <property type="project" value="UniProtKB-KW"/>
</dbReference>
<dbReference type="Gene3D" id="1.10.287.810">
    <property type="entry name" value="Mitochondrial import inner membrane translocase subunit tim13 like domains"/>
    <property type="match status" value="1"/>
</dbReference>
<dbReference type="InterPro" id="IPR004217">
    <property type="entry name" value="Tim10-like"/>
</dbReference>
<dbReference type="InterPro" id="IPR035427">
    <property type="entry name" value="Tim10-like_dom_sf"/>
</dbReference>
<dbReference type="Pfam" id="PF02953">
    <property type="entry name" value="zf-Tim10_DDP"/>
    <property type="match status" value="1"/>
</dbReference>
<dbReference type="SUPFAM" id="SSF144122">
    <property type="entry name" value="Tim10-like"/>
    <property type="match status" value="1"/>
</dbReference>
<protein>
    <recommendedName>
        <fullName>Mitochondrial import inner membrane translocase subunit tim8</fullName>
    </recommendedName>
</protein>
<feature type="chain" id="PRO_0000193592" description="Mitochondrial import inner membrane translocase subunit tim8">
    <location>
        <begin position="1"/>
        <end position="92"/>
    </location>
</feature>
<feature type="short sequence motif" description="Twin CX3C motif">
    <location>
        <begin position="43"/>
        <end position="68"/>
    </location>
</feature>
<feature type="disulfide bond" evidence="1">
    <location>
        <begin position="43"/>
        <end position="68"/>
    </location>
</feature>
<feature type="disulfide bond" evidence="1">
    <location>
        <begin position="47"/>
        <end position="64"/>
    </location>
</feature>